<feature type="transit peptide" description="Mitochondrion" evidence="9">
    <location>
        <begin position="1"/>
        <end position="43"/>
    </location>
</feature>
<feature type="propeptide" id="PRO_0000442306" description="Removed in mature form" evidence="13">
    <location>
        <begin position="44"/>
        <end position="105"/>
    </location>
</feature>
<feature type="chain" id="PRO_0000442307" description="Mitochondrial inner membrane m-AAA protease component paraplegin">
    <location>
        <begin position="106"/>
        <end position="781"/>
    </location>
</feature>
<feature type="topological domain" description="Mitochondrial matrix" evidence="12">
    <location>
        <begin position="106"/>
        <end position="144"/>
    </location>
</feature>
<feature type="transmembrane region" description="Helical; Name=1" evidence="4">
    <location>
        <begin position="145"/>
        <end position="165"/>
    </location>
</feature>
<feature type="topological domain" description="Mitochondrial intermembrane" evidence="12">
    <location>
        <begin position="166"/>
        <end position="248"/>
    </location>
</feature>
<feature type="transmembrane region" description="Helical; Name=2" evidence="4">
    <location>
        <begin position="249"/>
        <end position="269"/>
    </location>
</feature>
<feature type="topological domain" description="Mitochondrial matrix" evidence="12">
    <location>
        <begin position="270"/>
        <end position="781"/>
    </location>
</feature>
<feature type="region of interest" description="Disordered" evidence="5">
    <location>
        <begin position="22"/>
        <end position="56"/>
    </location>
</feature>
<feature type="region of interest" description="Disordered" evidence="5">
    <location>
        <begin position="103"/>
        <end position="135"/>
    </location>
</feature>
<feature type="region of interest" description="Interaction with PPIF" evidence="1">
    <location>
        <begin position="701"/>
        <end position="781"/>
    </location>
</feature>
<feature type="compositionally biased region" description="Low complexity" evidence="5">
    <location>
        <begin position="36"/>
        <end position="56"/>
    </location>
</feature>
<feature type="compositionally biased region" description="Basic and acidic residues" evidence="5">
    <location>
        <begin position="109"/>
        <end position="135"/>
    </location>
</feature>
<feature type="active site" evidence="2">
    <location>
        <position position="575"/>
    </location>
</feature>
<feature type="binding site" evidence="1">
    <location>
        <position position="312"/>
    </location>
    <ligand>
        <name>ATP</name>
        <dbReference type="ChEBI" id="CHEBI:30616"/>
    </ligand>
</feature>
<feature type="binding site" evidence="1">
    <location>
        <position position="352"/>
    </location>
    <ligand>
        <name>ATP</name>
        <dbReference type="ChEBI" id="CHEBI:30616"/>
    </ligand>
</feature>
<feature type="binding site" evidence="1">
    <location>
        <position position="353"/>
    </location>
    <ligand>
        <name>ATP</name>
        <dbReference type="ChEBI" id="CHEBI:30616"/>
    </ligand>
</feature>
<feature type="binding site" evidence="1">
    <location>
        <position position="354"/>
    </location>
    <ligand>
        <name>ATP</name>
        <dbReference type="ChEBI" id="CHEBI:30616"/>
    </ligand>
</feature>
<feature type="binding site" evidence="1">
    <location>
        <position position="355"/>
    </location>
    <ligand>
        <name>ATP</name>
        <dbReference type="ChEBI" id="CHEBI:30616"/>
    </ligand>
</feature>
<feature type="binding site" evidence="1">
    <location>
        <position position="356"/>
    </location>
    <ligand>
        <name>ATP</name>
        <dbReference type="ChEBI" id="CHEBI:30616"/>
    </ligand>
</feature>
<feature type="binding site" evidence="1">
    <location>
        <position position="357"/>
    </location>
    <ligand>
        <name>ATP</name>
        <dbReference type="ChEBI" id="CHEBI:30616"/>
    </ligand>
</feature>
<feature type="binding site" evidence="3">
    <location>
        <position position="574"/>
    </location>
    <ligand>
        <name>Zn(2+)</name>
        <dbReference type="ChEBI" id="CHEBI:29105"/>
        <note>catalytic</note>
    </ligand>
</feature>
<feature type="binding site" evidence="3">
    <location>
        <position position="578"/>
    </location>
    <ligand>
        <name>Zn(2+)</name>
        <dbReference type="ChEBI" id="CHEBI:29105"/>
        <note>catalytic</note>
    </ligand>
</feature>
<feature type="binding site" evidence="3">
    <location>
        <position position="650"/>
    </location>
    <ligand>
        <name>Zn(2+)</name>
        <dbReference type="ChEBI" id="CHEBI:29105"/>
        <note>catalytic</note>
    </ligand>
</feature>
<feature type="modified residue" description="3'-nitrotyrosine" evidence="15">
    <location>
        <position position="505"/>
    </location>
</feature>
<feature type="mutagenesis site" description="Absence of proteolytic activity. No loss of its processing into the mature form." evidence="9">
    <original>E</original>
    <variation>Q</variation>
    <location>
        <position position="575"/>
    </location>
</feature>
<feature type="sequence conflict" description="In Ref. 2; AAO21098." evidence="12" ref="2">
    <original>I</original>
    <variation>T</variation>
    <location>
        <position position="165"/>
    </location>
</feature>
<feature type="sequence conflict" description="In Ref. 5; AAI38142." evidence="12" ref="5">
    <original>A</original>
    <variation>S</variation>
    <location>
        <position position="168"/>
    </location>
</feature>
<feature type="sequence conflict" description="In Ref. 2; AAO21098." evidence="12" ref="2">
    <original>D</original>
    <variation>G</variation>
    <location>
        <position position="310"/>
    </location>
</feature>
<feature type="sequence conflict" description="In Ref. 1; AAN03852." evidence="12" ref="1">
    <original>L</original>
    <variation>F</variation>
    <location>
        <position position="471"/>
    </location>
</feature>
<accession>Q3ULF4</accession>
<accession>B2RQY8</accession>
<accession>D3Z1Z1</accession>
<accession>Q4V9T9</accession>
<accession>Q7TNG0</accession>
<accession>Q80X42</accession>
<accession>Q811Y5</accession>
<accession>Q8K414</accession>
<accession>Q8R1A1</accession>
<accession>Q8R1K2</accession>
<comment type="function">
    <text evidence="1 3 7">Catalytic component of the m-AAA protease, a protease that plays a key role in proteostasis of inner mitochondrial membrane proteins, and which is essential for axonal and neuron development (PubMed:16239145). SPG7 possesses both ATPase and protease activities: the ATPase activity is required to unfold substrates, threading them into the internal proteolytic cavity for hydrolysis into small peptide fragments (By similarity). The m-AAA protease exerts a dual role in the mitochondrial inner membrane: it mediates the processing of specific regulatory proteins and ensures protein quality control by degrading misfolded polypeptides (By similarity). Mediates protein maturation of the mitochondrial ribosomal subunit MRPL32/bL32m by catalyzing the cleavage of the presequence of MRPL32/bL32m prior to assembly into the mitochondrial ribosome (PubMed:16239145). Acts as a regulator of calcium in neurons by mediating degradation of SMDT1/EMRE before its assembly with the uniporter complex, limiting the availability of SMDT1/EMRE for MCU assembly and promoting efficient assembly of gatekeeper subunits with MCU (By similarity). Also regulates mitochondrial calcium by catalyzing degradation of MCU (By similarity). Plays a role in the formation and regulation of the mitochondrial permeability transition pore (mPTP) and its proteolytic activity is dispensable for this function (By similarity).</text>
</comment>
<comment type="catalytic activity">
    <reaction evidence="3">
        <text>ATP + H2O = ADP + phosphate + H(+)</text>
        <dbReference type="Rhea" id="RHEA:13065"/>
        <dbReference type="ChEBI" id="CHEBI:15377"/>
        <dbReference type="ChEBI" id="CHEBI:15378"/>
        <dbReference type="ChEBI" id="CHEBI:30616"/>
        <dbReference type="ChEBI" id="CHEBI:43474"/>
        <dbReference type="ChEBI" id="CHEBI:456216"/>
    </reaction>
    <physiologicalReaction direction="left-to-right" evidence="3">
        <dbReference type="Rhea" id="RHEA:13066"/>
    </physiologicalReaction>
</comment>
<comment type="cofactor">
    <cofactor evidence="3">
        <name>Zn(2+)</name>
        <dbReference type="ChEBI" id="CHEBI:29105"/>
    </cofactor>
    <text evidence="3">Binds 1 zinc ion per subunit.</text>
</comment>
<comment type="subunit">
    <text evidence="1 7 8 9 10">Forms heterohexamers with SPG7 and AFG3L1 (PubMed:17101804, PubMed:19656850, PubMed:22563492). The m-AAA protease is either composed of homohexamers of AFG3L2 or heterohexamers of AFG3L1, AFG3L2 and/or SPG7 (PubMed:16239145, PubMed:17101804, PubMed:19656850, PubMed:22563492). Component of the mitochondrial permeability transition pore complex (mPTPC), at least composed of SPG7, VDAC1 and PPIF (By similarity). Interacts with MAIP1 (By similarity).</text>
</comment>
<comment type="subcellular location">
    <subcellularLocation>
        <location evidence="9 10">Mitochondrion inner membrane</location>
        <topology evidence="4">Multi-pass membrane protein</topology>
    </subcellularLocation>
</comment>
<comment type="tissue specificity">
    <text evidence="10">Expressed in the brain and retina (at protein level).</text>
</comment>
<comment type="PTM">
    <text evidence="9">Upon import into the mitochondrion, the N-terminal transit peptide is cleaved by the mitochondrial-processing peptidase (MPP) to generate an intermediate form which undergoes a second proteolytic cleavage mediated by proteases AFG3L1 and/or AFG3L2 removing an additional N-terminal fragment to generate the proteolytically active mature form.</text>
</comment>
<comment type="disruption phenotype">
    <text evidence="6">Mice are affected by a distal axonopathy of spinal and peripheral axons, characterized by axonal swelling and degeneration. Mitochondrial morphological abnormalities occur in synaptic terminals and in distal regions of axons long before the first signs of swelling and degeneration and correlate with onset of motor impairment during a rotarod test.</text>
</comment>
<comment type="similarity">
    <text evidence="12">In the N-terminal section; belongs to the AAA ATPase family.</text>
</comment>
<comment type="similarity">
    <text evidence="12">In the C-terminal section; belongs to the peptidase M41 family.</text>
</comment>
<comment type="caution">
    <text evidence="13">According to PubMed:22563492, alternative splicing gives rise to an isoform (Paraplegin-2) which is identical to the sequence of the mature protein and localizes to the endoplasmic reticulum.</text>
</comment>
<comment type="sequence caution" evidence="12">
    <conflict type="erroneous initiation">
        <sequence resource="EMBL-CDS" id="AAH55488"/>
    </conflict>
    <text>Extended N-terminus.</text>
</comment>
<comment type="sequence caution" evidence="12">
    <conflict type="erroneous initiation">
        <sequence resource="EMBL-CDS" id="AAH96690"/>
    </conflict>
    <text>Extended N-terminus.</text>
</comment>
<name>SPG7_MOUSE</name>
<dbReference type="EC" id="3.4.24.-" evidence="7"/>
<dbReference type="EC" id="3.6.-.-" evidence="3"/>
<dbReference type="EMBL" id="AF512565">
    <property type="protein sequence ID" value="AAN03852.1"/>
    <property type="molecule type" value="mRNA"/>
</dbReference>
<dbReference type="EMBL" id="AF547215">
    <property type="protein sequence ID" value="AAO21098.1"/>
    <property type="molecule type" value="mRNA"/>
</dbReference>
<dbReference type="EMBL" id="AK145540">
    <property type="protein sequence ID" value="BAE26494.1"/>
    <property type="molecule type" value="mRNA"/>
</dbReference>
<dbReference type="EMBL" id="AC121819">
    <property type="status" value="NOT_ANNOTATED_CDS"/>
    <property type="molecule type" value="Genomic_DNA"/>
</dbReference>
<dbReference type="EMBL" id="BC024466">
    <property type="protein sequence ID" value="AAH24466.1"/>
    <property type="molecule type" value="mRNA"/>
</dbReference>
<dbReference type="EMBL" id="BC024986">
    <property type="protein sequence ID" value="AAH24986.1"/>
    <property type="molecule type" value="mRNA"/>
</dbReference>
<dbReference type="EMBL" id="BC051051">
    <property type="protein sequence ID" value="AAH51051.1"/>
    <property type="molecule type" value="mRNA"/>
</dbReference>
<dbReference type="EMBL" id="BC096690">
    <property type="protein sequence ID" value="AAH96690.1"/>
    <property type="status" value="ALT_INIT"/>
    <property type="molecule type" value="mRNA"/>
</dbReference>
<dbReference type="EMBL" id="BC055488">
    <property type="protein sequence ID" value="AAH55488.1"/>
    <property type="status" value="ALT_INIT"/>
    <property type="molecule type" value="mRNA"/>
</dbReference>
<dbReference type="EMBL" id="BC138141">
    <property type="protein sequence ID" value="AAI38142.1"/>
    <property type="molecule type" value="mRNA"/>
</dbReference>
<dbReference type="CCDS" id="CCDS40508.1"/>
<dbReference type="RefSeq" id="NP_694816.3">
    <property type="nucleotide sequence ID" value="NM_153176.4"/>
</dbReference>
<dbReference type="SMR" id="Q3ULF4"/>
<dbReference type="BioGRID" id="231586">
    <property type="interactions" value="4"/>
</dbReference>
<dbReference type="FunCoup" id="Q3ULF4">
    <property type="interactions" value="1605"/>
</dbReference>
<dbReference type="STRING" id="10090.ENSMUSP00000119552"/>
<dbReference type="MEROPS" id="M41.006"/>
<dbReference type="iPTMnet" id="Q3ULF4"/>
<dbReference type="PhosphoSitePlus" id="Q3ULF4"/>
<dbReference type="jPOST" id="Q3ULF4"/>
<dbReference type="PaxDb" id="10090-ENSMUSP00000119552"/>
<dbReference type="ProteomicsDB" id="261134"/>
<dbReference type="Pumba" id="Q3ULF4"/>
<dbReference type="Antibodypedia" id="30863">
    <property type="antibodies" value="415 antibodies from 21 providers"/>
</dbReference>
<dbReference type="DNASU" id="234847"/>
<dbReference type="Ensembl" id="ENSMUST00000149248.9">
    <property type="protein sequence ID" value="ENSMUSP00000119552.3"/>
    <property type="gene ID" value="ENSMUSG00000000738.19"/>
</dbReference>
<dbReference type="GeneID" id="234847"/>
<dbReference type="KEGG" id="mmu:234847"/>
<dbReference type="UCSC" id="uc009nuc.1">
    <property type="organism name" value="mouse"/>
</dbReference>
<dbReference type="AGR" id="MGI:2385906"/>
<dbReference type="CTD" id="6687"/>
<dbReference type="MGI" id="MGI:2385906">
    <property type="gene designation" value="Spg7"/>
</dbReference>
<dbReference type="VEuPathDB" id="HostDB:ENSMUSG00000000738"/>
<dbReference type="eggNOG" id="KOG0731">
    <property type="taxonomic scope" value="Eukaryota"/>
</dbReference>
<dbReference type="GeneTree" id="ENSGT00940000156329"/>
<dbReference type="InParanoid" id="Q3ULF4"/>
<dbReference type="OMA" id="RMKSMKS"/>
<dbReference type="OrthoDB" id="1413014at2759"/>
<dbReference type="TreeFam" id="TF105003"/>
<dbReference type="BRENDA" id="3.4.24.B18">
    <property type="organism ID" value="3474"/>
</dbReference>
<dbReference type="Reactome" id="R-MMU-8949664">
    <property type="pathway name" value="Processing of SMDT1"/>
</dbReference>
<dbReference type="Reactome" id="R-MMU-9837999">
    <property type="pathway name" value="Mitochondrial protein degradation"/>
</dbReference>
<dbReference type="BioGRID-ORCS" id="234847">
    <property type="hits" value="0 hits in 80 CRISPR screens"/>
</dbReference>
<dbReference type="ChiTaRS" id="Spg7">
    <property type="organism name" value="mouse"/>
</dbReference>
<dbReference type="PRO" id="PR:Q3ULF4"/>
<dbReference type="Proteomes" id="UP000000589">
    <property type="component" value="Chromosome 8"/>
</dbReference>
<dbReference type="RNAct" id="Q3ULF4">
    <property type="molecule type" value="protein"/>
</dbReference>
<dbReference type="Bgee" id="ENSMUSG00000000738">
    <property type="expression patterns" value="Expressed in retinal neural layer and 202 other cell types or tissues"/>
</dbReference>
<dbReference type="ExpressionAtlas" id="Q3ULF4">
    <property type="expression patterns" value="baseline and differential"/>
</dbReference>
<dbReference type="GO" id="GO:1904115">
    <property type="term" value="C:axon cytoplasm"/>
    <property type="evidence" value="ECO:0007669"/>
    <property type="project" value="GOC"/>
</dbReference>
<dbReference type="GO" id="GO:0005745">
    <property type="term" value="C:m-AAA complex"/>
    <property type="evidence" value="ECO:0000314"/>
    <property type="project" value="MGI"/>
</dbReference>
<dbReference type="GO" id="GO:0005743">
    <property type="term" value="C:mitochondrial inner membrane"/>
    <property type="evidence" value="ECO:0000314"/>
    <property type="project" value="UniProtKB"/>
</dbReference>
<dbReference type="GO" id="GO:0005757">
    <property type="term" value="C:mitochondrial permeability transition pore complex"/>
    <property type="evidence" value="ECO:0000250"/>
    <property type="project" value="UniProtKB"/>
</dbReference>
<dbReference type="GO" id="GO:0005739">
    <property type="term" value="C:mitochondrion"/>
    <property type="evidence" value="ECO:0000314"/>
    <property type="project" value="MGI"/>
</dbReference>
<dbReference type="GO" id="GO:0005524">
    <property type="term" value="F:ATP binding"/>
    <property type="evidence" value="ECO:0007669"/>
    <property type="project" value="UniProtKB-KW"/>
</dbReference>
<dbReference type="GO" id="GO:0016887">
    <property type="term" value="F:ATP hydrolysis activity"/>
    <property type="evidence" value="ECO:0007669"/>
    <property type="project" value="InterPro"/>
</dbReference>
<dbReference type="GO" id="GO:0004176">
    <property type="term" value="F:ATP-dependent peptidase activity"/>
    <property type="evidence" value="ECO:0007669"/>
    <property type="project" value="InterPro"/>
</dbReference>
<dbReference type="GO" id="GO:0004222">
    <property type="term" value="F:metalloendopeptidase activity"/>
    <property type="evidence" value="ECO:0000250"/>
    <property type="project" value="UniProtKB"/>
</dbReference>
<dbReference type="GO" id="GO:0008270">
    <property type="term" value="F:zinc ion binding"/>
    <property type="evidence" value="ECO:0007669"/>
    <property type="project" value="InterPro"/>
</dbReference>
<dbReference type="GO" id="GO:0008089">
    <property type="term" value="P:anterograde axonal transport"/>
    <property type="evidence" value="ECO:0000315"/>
    <property type="project" value="MGI"/>
</dbReference>
<dbReference type="GO" id="GO:0007155">
    <property type="term" value="P:cell adhesion"/>
    <property type="evidence" value="ECO:0000304"/>
    <property type="project" value="MGI"/>
</dbReference>
<dbReference type="GO" id="GO:1902686">
    <property type="term" value="P:mitochondrial outer membrane permeabilization involved in programmed cell death"/>
    <property type="evidence" value="ECO:0000250"/>
    <property type="project" value="UniProtKB"/>
</dbReference>
<dbReference type="GO" id="GO:0007005">
    <property type="term" value="P:mitochondrion organization"/>
    <property type="evidence" value="ECO:0000315"/>
    <property type="project" value="MGI"/>
</dbReference>
<dbReference type="GO" id="GO:0006508">
    <property type="term" value="P:proteolysis"/>
    <property type="evidence" value="ECO:0007669"/>
    <property type="project" value="UniProtKB-KW"/>
</dbReference>
<dbReference type="GO" id="GO:0110097">
    <property type="term" value="P:regulation of calcium import into the mitochondrion"/>
    <property type="evidence" value="ECO:0000250"/>
    <property type="project" value="UniProtKB"/>
</dbReference>
<dbReference type="GO" id="GO:0030155">
    <property type="term" value="P:regulation of cell adhesion"/>
    <property type="evidence" value="ECO:0000304"/>
    <property type="project" value="MGI"/>
</dbReference>
<dbReference type="GO" id="GO:0046902">
    <property type="term" value="P:regulation of mitochondrial membrane permeability"/>
    <property type="evidence" value="ECO:0000250"/>
    <property type="project" value="UniProtKB"/>
</dbReference>
<dbReference type="CDD" id="cd19501">
    <property type="entry name" value="RecA-like_FtsH"/>
    <property type="match status" value="1"/>
</dbReference>
<dbReference type="FunFam" id="3.40.50.300:FF:000277">
    <property type="entry name" value="ATP-dependent zinc metalloprotease FtsH"/>
    <property type="match status" value="1"/>
</dbReference>
<dbReference type="FunFam" id="1.10.8.60:FF:000033">
    <property type="entry name" value="paraplegin isoform X1"/>
    <property type="match status" value="1"/>
</dbReference>
<dbReference type="FunFam" id="1.20.58.760:FF:000004">
    <property type="entry name" value="paraplegin isoform X1"/>
    <property type="match status" value="1"/>
</dbReference>
<dbReference type="FunFam" id="3.40.1690.20:FF:000002">
    <property type="entry name" value="paraplegin isoform X1"/>
    <property type="match status" value="1"/>
</dbReference>
<dbReference type="Gene3D" id="1.10.8.60">
    <property type="match status" value="1"/>
</dbReference>
<dbReference type="Gene3D" id="3.40.1690.20">
    <property type="match status" value="1"/>
</dbReference>
<dbReference type="Gene3D" id="3.40.50.300">
    <property type="entry name" value="P-loop containing nucleotide triphosphate hydrolases"/>
    <property type="match status" value="1"/>
</dbReference>
<dbReference type="Gene3D" id="1.20.58.760">
    <property type="entry name" value="Peptidase M41"/>
    <property type="match status" value="1"/>
</dbReference>
<dbReference type="HAMAP" id="MF_01458">
    <property type="entry name" value="FtsH"/>
    <property type="match status" value="1"/>
</dbReference>
<dbReference type="InterPro" id="IPR003593">
    <property type="entry name" value="AAA+_ATPase"/>
</dbReference>
<dbReference type="InterPro" id="IPR041569">
    <property type="entry name" value="AAA_lid_3"/>
</dbReference>
<dbReference type="InterPro" id="IPR050928">
    <property type="entry name" value="ATP-dep_Zn_Metalloprotease"/>
</dbReference>
<dbReference type="InterPro" id="IPR003959">
    <property type="entry name" value="ATPase_AAA_core"/>
</dbReference>
<dbReference type="InterPro" id="IPR005936">
    <property type="entry name" value="FtsH"/>
</dbReference>
<dbReference type="InterPro" id="IPR027417">
    <property type="entry name" value="P-loop_NTPase"/>
</dbReference>
<dbReference type="InterPro" id="IPR011546">
    <property type="entry name" value="Pept_M41_FtsH_extracell"/>
</dbReference>
<dbReference type="InterPro" id="IPR000642">
    <property type="entry name" value="Peptidase_M41"/>
</dbReference>
<dbReference type="InterPro" id="IPR037219">
    <property type="entry name" value="Peptidase_M41-like"/>
</dbReference>
<dbReference type="NCBIfam" id="TIGR01241">
    <property type="entry name" value="FtsH_fam"/>
    <property type="match status" value="1"/>
</dbReference>
<dbReference type="PANTHER" id="PTHR43655">
    <property type="entry name" value="ATP-DEPENDENT PROTEASE"/>
    <property type="match status" value="1"/>
</dbReference>
<dbReference type="PANTHER" id="PTHR43655:SF8">
    <property type="entry name" value="PARAPLEGIN"/>
    <property type="match status" value="1"/>
</dbReference>
<dbReference type="Pfam" id="PF00004">
    <property type="entry name" value="AAA"/>
    <property type="match status" value="1"/>
</dbReference>
<dbReference type="Pfam" id="PF17862">
    <property type="entry name" value="AAA_lid_3"/>
    <property type="match status" value="1"/>
</dbReference>
<dbReference type="Pfam" id="PF06480">
    <property type="entry name" value="FtsH_ext"/>
    <property type="match status" value="1"/>
</dbReference>
<dbReference type="Pfam" id="PF01434">
    <property type="entry name" value="Peptidase_M41"/>
    <property type="match status" value="1"/>
</dbReference>
<dbReference type="SMART" id="SM00382">
    <property type="entry name" value="AAA"/>
    <property type="match status" value="1"/>
</dbReference>
<dbReference type="SUPFAM" id="SSF140990">
    <property type="entry name" value="FtsH protease domain-like"/>
    <property type="match status" value="1"/>
</dbReference>
<dbReference type="SUPFAM" id="SSF52540">
    <property type="entry name" value="P-loop containing nucleoside triphosphate hydrolases"/>
    <property type="match status" value="1"/>
</dbReference>
<gene>
    <name evidence="14" type="primary">Spg7</name>
</gene>
<sequence>MAAALLLLRGLRPGPEPRPRRLWGLLSGRGPGLSSGAGARRPYAARGTPVGPAAAGGHAPQSLLLRILTPSFEGISGLLLKQHIVPNAVRLWPLSGSTLYFNTSRMKQKNKDNDKPKGKTPEDDEEEKRRKEREDQMYRERLRTLFIIALVMSLLNSLSTSGGSISWADFVNEMLAKGEVQRVQVVPESDVVEVYLHPGAVVFGRPRLALMYRMQVANIDKFEEKLRAAEDELNIESKDRIPVSYKRTGFFGNALYALGMTAVGLAILWYVFRLAGMTGREGGFSAFNQLKMARFTIVDGKTGKGVSFQDVAGMHEAKLEVREFVDYLKSPERFLQLGAKVPKGALLLGPPGCGKTLLAKAVATEAQVPFLAMAGPEFVEVIGGLGAARVRSLFKEARARAPCIVYIDEIDAVGKKRSTSMSGFSNTEEEQTLNQLLVEMDGMGTTDHVIVLASTNRADVLDNALMRPGRLDRHVFIDLPTLQERREIFEQHLKGLKLTQPSSFYSQRLAELTPGFSGADIANICNEAALHAAREGHTSVHTFNFEYAVERVIAGTAKKSKILSKEEQRVVAFHESGHALVGWLLEHTEAVMKVSIAPRTNAALGFSQMLPRDQYLFTKEQLFERMCMALGGRAAEAISFSRVTSGAQDDLRKVTRIAYSMVKQFGMAPSIGPVSFPEAQEGLMGIGRRPFSQGLQQMMDHEAKLLVAKAYRHTEKVLLDNLDKLQALANALLEKEVINYEDIEALIGPPPHGPKKMIAPQKWIDAEKERQASGEEEAPAP</sequence>
<evidence type="ECO:0000250" key="1">
    <source>
        <dbReference type="UniProtKB" id="Q9UQ90"/>
    </source>
</evidence>
<evidence type="ECO:0000250" key="2">
    <source>
        <dbReference type="UniProtKB" id="Q9WZ49"/>
    </source>
</evidence>
<evidence type="ECO:0000250" key="3">
    <source>
        <dbReference type="UniProtKB" id="Q9Y4W6"/>
    </source>
</evidence>
<evidence type="ECO:0000255" key="4"/>
<evidence type="ECO:0000256" key="5">
    <source>
        <dbReference type="SAM" id="MobiDB-lite"/>
    </source>
</evidence>
<evidence type="ECO:0000269" key="6">
    <source>
    </source>
</evidence>
<evidence type="ECO:0000269" key="7">
    <source>
    </source>
</evidence>
<evidence type="ECO:0000269" key="8">
    <source>
    </source>
</evidence>
<evidence type="ECO:0000269" key="9">
    <source>
    </source>
</evidence>
<evidence type="ECO:0000269" key="10">
    <source>
    </source>
</evidence>
<evidence type="ECO:0000303" key="11">
    <source>
    </source>
</evidence>
<evidence type="ECO:0000305" key="12"/>
<evidence type="ECO:0000305" key="13">
    <source>
    </source>
</evidence>
<evidence type="ECO:0000312" key="14">
    <source>
        <dbReference type="MGI" id="MGI:2385906"/>
    </source>
</evidence>
<evidence type="ECO:0007744" key="15">
    <source>
    </source>
</evidence>
<protein>
    <recommendedName>
        <fullName evidence="12">Mitochondrial inner membrane m-AAA protease component paraplegin</fullName>
        <ecNumber evidence="7">3.4.24.-</ecNumber>
        <ecNumber evidence="3">3.6.-.-</ecNumber>
    </recommendedName>
    <alternativeName>
        <fullName evidence="11">Paraplegin</fullName>
    </alternativeName>
    <alternativeName>
        <fullName evidence="14">Spastic paraplegia 7 protein</fullName>
    </alternativeName>
</protein>
<organism>
    <name type="scientific">Mus musculus</name>
    <name type="common">Mouse</name>
    <dbReference type="NCBI Taxonomy" id="10090"/>
    <lineage>
        <taxon>Eukaryota</taxon>
        <taxon>Metazoa</taxon>
        <taxon>Chordata</taxon>
        <taxon>Craniata</taxon>
        <taxon>Vertebrata</taxon>
        <taxon>Euteleostomi</taxon>
        <taxon>Mammalia</taxon>
        <taxon>Eutheria</taxon>
        <taxon>Euarchontoglires</taxon>
        <taxon>Glires</taxon>
        <taxon>Rodentia</taxon>
        <taxon>Myomorpha</taxon>
        <taxon>Muroidea</taxon>
        <taxon>Muridae</taxon>
        <taxon>Murinae</taxon>
        <taxon>Mus</taxon>
        <taxon>Mus</taxon>
    </lineage>
</organism>
<keyword id="KW-0067">ATP-binding</keyword>
<keyword id="KW-0903">Direct protein sequencing</keyword>
<keyword id="KW-0378">Hydrolase</keyword>
<keyword id="KW-0472">Membrane</keyword>
<keyword id="KW-0479">Metal-binding</keyword>
<keyword id="KW-0482">Metalloprotease</keyword>
<keyword id="KW-0496">Mitochondrion</keyword>
<keyword id="KW-0999">Mitochondrion inner membrane</keyword>
<keyword id="KW-0944">Nitration</keyword>
<keyword id="KW-0547">Nucleotide-binding</keyword>
<keyword id="KW-0645">Protease</keyword>
<keyword id="KW-1185">Reference proteome</keyword>
<keyword id="KW-0809">Transit peptide</keyword>
<keyword id="KW-0812">Transmembrane</keyword>
<keyword id="KW-1133">Transmembrane helix</keyword>
<keyword id="KW-0862">Zinc</keyword>
<reference key="1">
    <citation type="journal article" date="2004" name="J. Clin. Invest.">
        <title>Axonal degeneration in paraplegin-deficient mice is associated with abnormal mitochondria and impairment of axonal transport.</title>
        <authorList>
            <person name="Ferreirinha F."/>
            <person name="Quattrini A."/>
            <person name="Pirozzi M."/>
            <person name="Valsecchi V."/>
            <person name="Dina G."/>
            <person name="Broccoli V."/>
            <person name="Auricchio A."/>
            <person name="Piemonte F."/>
            <person name="Tozzi G."/>
            <person name="Gaeta L."/>
            <person name="Casari G."/>
            <person name="Ballabio A."/>
            <person name="Rugarli E.I."/>
        </authorList>
    </citation>
    <scope>NUCLEOTIDE SEQUENCE [MRNA]</scope>
    <scope>DISRUPTION PHENOTYPE</scope>
    <source>
        <strain>Swiss Webster / NIH</strain>
    </source>
</reference>
<reference key="2">
    <citation type="submission" date="2002-09" db="EMBL/GenBank/DDBJ databases">
        <title>Cloning and expression analysis of the mouse Spg7 cDNA.</title>
        <authorList>
            <person name="Ungaro P."/>
            <person name="Milano A."/>
            <person name="Cocozza S."/>
        </authorList>
    </citation>
    <scope>NUCLEOTIDE SEQUENCE [MRNA]</scope>
    <source>
        <strain>BALB/cJ</strain>
    </source>
</reference>
<reference key="3">
    <citation type="journal article" date="2005" name="Science">
        <title>The transcriptional landscape of the mammalian genome.</title>
        <authorList>
            <person name="Carninci P."/>
            <person name="Kasukawa T."/>
            <person name="Katayama S."/>
            <person name="Gough J."/>
            <person name="Frith M.C."/>
            <person name="Maeda N."/>
            <person name="Oyama R."/>
            <person name="Ravasi T."/>
            <person name="Lenhard B."/>
            <person name="Wells C."/>
            <person name="Kodzius R."/>
            <person name="Shimokawa K."/>
            <person name="Bajic V.B."/>
            <person name="Brenner S.E."/>
            <person name="Batalov S."/>
            <person name="Forrest A.R."/>
            <person name="Zavolan M."/>
            <person name="Davis M.J."/>
            <person name="Wilming L.G."/>
            <person name="Aidinis V."/>
            <person name="Allen J.E."/>
            <person name="Ambesi-Impiombato A."/>
            <person name="Apweiler R."/>
            <person name="Aturaliya R.N."/>
            <person name="Bailey T.L."/>
            <person name="Bansal M."/>
            <person name="Baxter L."/>
            <person name="Beisel K.W."/>
            <person name="Bersano T."/>
            <person name="Bono H."/>
            <person name="Chalk A.M."/>
            <person name="Chiu K.P."/>
            <person name="Choudhary V."/>
            <person name="Christoffels A."/>
            <person name="Clutterbuck D.R."/>
            <person name="Crowe M.L."/>
            <person name="Dalla E."/>
            <person name="Dalrymple B.P."/>
            <person name="de Bono B."/>
            <person name="Della Gatta G."/>
            <person name="di Bernardo D."/>
            <person name="Down T."/>
            <person name="Engstrom P."/>
            <person name="Fagiolini M."/>
            <person name="Faulkner G."/>
            <person name="Fletcher C.F."/>
            <person name="Fukushima T."/>
            <person name="Furuno M."/>
            <person name="Futaki S."/>
            <person name="Gariboldi M."/>
            <person name="Georgii-Hemming P."/>
            <person name="Gingeras T.R."/>
            <person name="Gojobori T."/>
            <person name="Green R.E."/>
            <person name="Gustincich S."/>
            <person name="Harbers M."/>
            <person name="Hayashi Y."/>
            <person name="Hensch T.K."/>
            <person name="Hirokawa N."/>
            <person name="Hill D."/>
            <person name="Huminiecki L."/>
            <person name="Iacono M."/>
            <person name="Ikeo K."/>
            <person name="Iwama A."/>
            <person name="Ishikawa T."/>
            <person name="Jakt M."/>
            <person name="Kanapin A."/>
            <person name="Katoh M."/>
            <person name="Kawasawa Y."/>
            <person name="Kelso J."/>
            <person name="Kitamura H."/>
            <person name="Kitano H."/>
            <person name="Kollias G."/>
            <person name="Krishnan S.P."/>
            <person name="Kruger A."/>
            <person name="Kummerfeld S.K."/>
            <person name="Kurochkin I.V."/>
            <person name="Lareau L.F."/>
            <person name="Lazarevic D."/>
            <person name="Lipovich L."/>
            <person name="Liu J."/>
            <person name="Liuni S."/>
            <person name="McWilliam S."/>
            <person name="Madan Babu M."/>
            <person name="Madera M."/>
            <person name="Marchionni L."/>
            <person name="Matsuda H."/>
            <person name="Matsuzawa S."/>
            <person name="Miki H."/>
            <person name="Mignone F."/>
            <person name="Miyake S."/>
            <person name="Morris K."/>
            <person name="Mottagui-Tabar S."/>
            <person name="Mulder N."/>
            <person name="Nakano N."/>
            <person name="Nakauchi H."/>
            <person name="Ng P."/>
            <person name="Nilsson R."/>
            <person name="Nishiguchi S."/>
            <person name="Nishikawa S."/>
            <person name="Nori F."/>
            <person name="Ohara O."/>
            <person name="Okazaki Y."/>
            <person name="Orlando V."/>
            <person name="Pang K.C."/>
            <person name="Pavan W.J."/>
            <person name="Pavesi G."/>
            <person name="Pesole G."/>
            <person name="Petrovsky N."/>
            <person name="Piazza S."/>
            <person name="Reed J."/>
            <person name="Reid J.F."/>
            <person name="Ring B.Z."/>
            <person name="Ringwald M."/>
            <person name="Rost B."/>
            <person name="Ruan Y."/>
            <person name="Salzberg S.L."/>
            <person name="Sandelin A."/>
            <person name="Schneider C."/>
            <person name="Schoenbach C."/>
            <person name="Sekiguchi K."/>
            <person name="Semple C.A."/>
            <person name="Seno S."/>
            <person name="Sessa L."/>
            <person name="Sheng Y."/>
            <person name="Shibata Y."/>
            <person name="Shimada H."/>
            <person name="Shimada K."/>
            <person name="Silva D."/>
            <person name="Sinclair B."/>
            <person name="Sperling S."/>
            <person name="Stupka E."/>
            <person name="Sugiura K."/>
            <person name="Sultana R."/>
            <person name="Takenaka Y."/>
            <person name="Taki K."/>
            <person name="Tammoja K."/>
            <person name="Tan S.L."/>
            <person name="Tang S."/>
            <person name="Taylor M.S."/>
            <person name="Tegner J."/>
            <person name="Teichmann S.A."/>
            <person name="Ueda H.R."/>
            <person name="van Nimwegen E."/>
            <person name="Verardo R."/>
            <person name="Wei C.L."/>
            <person name="Yagi K."/>
            <person name="Yamanishi H."/>
            <person name="Zabarovsky E."/>
            <person name="Zhu S."/>
            <person name="Zimmer A."/>
            <person name="Hide W."/>
            <person name="Bult C."/>
            <person name="Grimmond S.M."/>
            <person name="Teasdale R.D."/>
            <person name="Liu E.T."/>
            <person name="Brusic V."/>
            <person name="Quackenbush J."/>
            <person name="Wahlestedt C."/>
            <person name="Mattick J.S."/>
            <person name="Hume D.A."/>
            <person name="Kai C."/>
            <person name="Sasaki D."/>
            <person name="Tomaru Y."/>
            <person name="Fukuda S."/>
            <person name="Kanamori-Katayama M."/>
            <person name="Suzuki M."/>
            <person name="Aoki J."/>
            <person name="Arakawa T."/>
            <person name="Iida J."/>
            <person name="Imamura K."/>
            <person name="Itoh M."/>
            <person name="Kato T."/>
            <person name="Kawaji H."/>
            <person name="Kawagashira N."/>
            <person name="Kawashima T."/>
            <person name="Kojima M."/>
            <person name="Kondo S."/>
            <person name="Konno H."/>
            <person name="Nakano K."/>
            <person name="Ninomiya N."/>
            <person name="Nishio T."/>
            <person name="Okada M."/>
            <person name="Plessy C."/>
            <person name="Shibata K."/>
            <person name="Shiraki T."/>
            <person name="Suzuki S."/>
            <person name="Tagami M."/>
            <person name="Waki K."/>
            <person name="Watahiki A."/>
            <person name="Okamura-Oho Y."/>
            <person name="Suzuki H."/>
            <person name="Kawai J."/>
            <person name="Hayashizaki Y."/>
        </authorList>
    </citation>
    <scope>NUCLEOTIDE SEQUENCE [LARGE SCALE MRNA]</scope>
    <source>
        <strain>C57BL/6J</strain>
    </source>
</reference>
<reference key="4">
    <citation type="journal article" date="2004" name="Genome Res.">
        <title>The status, quality, and expansion of the NIH full-length cDNA project: the Mammalian Gene Collection (MGC).</title>
        <authorList>
            <consortium name="The MGC Project Team"/>
        </authorList>
    </citation>
    <scope>NUCLEOTIDE SEQUENCE [LARGE SCALE MRNA]</scope>
    <source>
        <strain>Czech II</strain>
        <strain>FVB/N</strain>
        <tissue>Brain</tissue>
        <tissue>Kidney</tissue>
        <tissue>Liver</tissue>
        <tissue>Lung</tissue>
    </source>
</reference>
<reference key="5">
    <citation type="journal article" date="2009" name="PLoS Biol.">
        <title>Lineage-specific biology revealed by a finished genome assembly of the mouse.</title>
        <authorList>
            <person name="Church D.M."/>
            <person name="Goodstadt L."/>
            <person name="Hillier L.W."/>
            <person name="Zody M.C."/>
            <person name="Goldstein S."/>
            <person name="She X."/>
            <person name="Bult C.J."/>
            <person name="Agarwala R."/>
            <person name="Cherry J.L."/>
            <person name="DiCuccio M."/>
            <person name="Hlavina W."/>
            <person name="Kapustin Y."/>
            <person name="Meric P."/>
            <person name="Maglott D."/>
            <person name="Birtle Z."/>
            <person name="Marques A.C."/>
            <person name="Graves T."/>
            <person name="Zhou S."/>
            <person name="Teague B."/>
            <person name="Potamousis K."/>
            <person name="Churas C."/>
            <person name="Place M."/>
            <person name="Herschleb J."/>
            <person name="Runnheim R."/>
            <person name="Forrest D."/>
            <person name="Amos-Landgraf J."/>
            <person name="Schwartz D.C."/>
            <person name="Cheng Z."/>
            <person name="Lindblad-Toh K."/>
            <person name="Eichler E.E."/>
            <person name="Ponting C.P."/>
        </authorList>
    </citation>
    <scope>NUCLEOTIDE SEQUENCE [LARGE SCALE GENOMIC DNA]</scope>
    <source>
        <strain>C57BL/6J</strain>
    </source>
</reference>
<reference key="6">
    <citation type="journal article" date="2009" name="Mol. Biol. Cell">
        <title>Autocatalytic processing of m-AAA protease subunits in mitochondria.</title>
        <authorList>
            <person name="Koppen M."/>
            <person name="Bonn F."/>
            <person name="Ehses S."/>
            <person name="Langer T."/>
        </authorList>
    </citation>
    <scope>PROTEIN SEQUENCE OF 44-53 AND 106-115</scope>
    <scope>PROTEOLYTIC PROCESSING</scope>
    <scope>SUBUNIT</scope>
    <scope>INTERACTION WITH AFG3L1 AND AFG3L2</scope>
    <scope>MUTAGENESIS OF GLU-575</scope>
    <scope>SUBCELLULAR LOCATION</scope>
</reference>
<reference key="7">
    <citation type="journal article" date="2005" name="Cell">
        <title>The m-AAA protease defective in hereditary spastic paraplegia controls ribosome assembly in mitochondria.</title>
        <authorList>
            <person name="Nolden M."/>
            <person name="Ehses S."/>
            <person name="Koppen M."/>
            <person name="Bernacchia A."/>
            <person name="Rugarli E.I."/>
            <person name="Langer T."/>
        </authorList>
    </citation>
    <scope>FUNCTION</scope>
    <scope>INTERACTION WITH AFG3L2</scope>
</reference>
<reference key="8">
    <citation type="journal article" date="2006" name="Biochemistry">
        <title>Endogenously nitrated proteins in mouse brain: links to neurodegenerative disease.</title>
        <authorList>
            <person name="Sacksteder C.A."/>
            <person name="Qian W.-J."/>
            <person name="Knyushko T.V."/>
            <person name="Wang H."/>
            <person name="Chin M.H."/>
            <person name="Lacan G."/>
            <person name="Melega W.P."/>
            <person name="Camp D.G. II"/>
            <person name="Smith R.D."/>
            <person name="Smith D.J."/>
            <person name="Squier T.C."/>
            <person name="Bigelow D.J."/>
        </authorList>
    </citation>
    <scope>NITRATION [LARGE SCALE ANALYSIS] AT TYR-505</scope>
    <scope>IDENTIFICATION BY MASS SPECTROMETRY [LARGE SCALE ANALYSIS]</scope>
    <source>
        <tissue>Brain</tissue>
    </source>
</reference>
<reference key="9">
    <citation type="journal article" date="2007" name="Mol. Cell. Biol.">
        <title>Variable and tissue-specific subunit composition of mitochondrial m-AAA protease complexes linked to hereditary spastic paraplegia.</title>
        <authorList>
            <person name="Koppen M."/>
            <person name="Metodiev M.D."/>
            <person name="Casari G."/>
            <person name="Rugarli E.I."/>
            <person name="Langer T."/>
        </authorList>
    </citation>
    <scope>SUBUNIT</scope>
</reference>
<reference key="10">
    <citation type="journal article" date="2010" name="Cell">
        <title>A tissue-specific atlas of mouse protein phosphorylation and expression.</title>
        <authorList>
            <person name="Huttlin E.L."/>
            <person name="Jedrychowski M.P."/>
            <person name="Elias J.E."/>
            <person name="Goswami T."/>
            <person name="Rad R."/>
            <person name="Beausoleil S.A."/>
            <person name="Villen J."/>
            <person name="Haas W."/>
            <person name="Sowa M.E."/>
            <person name="Gygi S.P."/>
        </authorList>
    </citation>
    <scope>IDENTIFICATION BY MASS SPECTROMETRY [LARGE SCALE ANALYSIS]</scope>
    <source>
        <tissue>Brown adipose tissue</tissue>
        <tissue>Heart</tissue>
        <tissue>Kidney</tissue>
        <tissue>Liver</tissue>
        <tissue>Testis</tissue>
    </source>
</reference>
<reference key="11">
    <citation type="journal article" date="2012" name="PLoS ONE">
        <title>Alternative splicing of Spg7, a gene involved in hereditary spastic paraplegia, encodes a variant of paraplegin targeted to the endoplasmic reticulum.</title>
        <authorList>
            <person name="Mancuso G."/>
            <person name="Barth E."/>
            <person name="Crivello P."/>
            <person name="Rugarli E.I."/>
        </authorList>
    </citation>
    <scope>SUBUNIT</scope>
    <scope>SUBCELLULAR LOCATION</scope>
    <scope>TISSUE SPECIFICITY</scope>
    <scope>INTERACTION WITH AFG3L2</scope>
    <scope>CAUTION</scope>
</reference>
<proteinExistence type="evidence at protein level"/>